<feature type="chain" id="PRO_0000146516" description="Small ribosomal subunit protein uS10">
    <location>
        <begin position="1"/>
        <end position="105"/>
    </location>
</feature>
<name>RS10_CHLMU</name>
<protein>
    <recommendedName>
        <fullName evidence="1">Small ribosomal subunit protein uS10</fullName>
    </recommendedName>
    <alternativeName>
        <fullName evidence="2">30S ribosomal protein S10</fullName>
    </alternativeName>
</protein>
<proteinExistence type="inferred from homology"/>
<comment type="function">
    <text evidence="1">Involved in the binding of tRNA to the ribosomes.</text>
</comment>
<comment type="subunit">
    <text evidence="1">Part of the 30S ribosomal subunit.</text>
</comment>
<comment type="similarity">
    <text evidence="1">Belongs to the universal ribosomal protein uS10 family.</text>
</comment>
<organism>
    <name type="scientific">Chlamydia muridarum (strain MoPn / Nigg)</name>
    <dbReference type="NCBI Taxonomy" id="243161"/>
    <lineage>
        <taxon>Bacteria</taxon>
        <taxon>Pseudomonadati</taxon>
        <taxon>Chlamydiota</taxon>
        <taxon>Chlamydiia</taxon>
        <taxon>Chlamydiales</taxon>
        <taxon>Chlamydiaceae</taxon>
        <taxon>Chlamydia/Chlamydophila group</taxon>
        <taxon>Chlamydia</taxon>
    </lineage>
</organism>
<gene>
    <name evidence="1" type="primary">rpsJ</name>
    <name type="synonym">rs10</name>
    <name type="ordered locus">TC_0720</name>
</gene>
<evidence type="ECO:0000255" key="1">
    <source>
        <dbReference type="HAMAP-Rule" id="MF_00508"/>
    </source>
</evidence>
<evidence type="ECO:0000305" key="2"/>
<accession>P0A4A2</accession>
<accession>O84443</accession>
<accession>Q9ZG26</accession>
<reference key="1">
    <citation type="journal article" date="2000" name="Nucleic Acids Res.">
        <title>Genome sequences of Chlamydia trachomatis MoPn and Chlamydia pneumoniae AR39.</title>
        <authorList>
            <person name="Read T.D."/>
            <person name="Brunham R.C."/>
            <person name="Shen C."/>
            <person name="Gill S.R."/>
            <person name="Heidelberg J.F."/>
            <person name="White O."/>
            <person name="Hickey E.K."/>
            <person name="Peterson J.D."/>
            <person name="Utterback T.R."/>
            <person name="Berry K.J."/>
            <person name="Bass S."/>
            <person name="Linher K.D."/>
            <person name="Weidman J.F."/>
            <person name="Khouri H.M."/>
            <person name="Craven B."/>
            <person name="Bowman C."/>
            <person name="Dodson R.J."/>
            <person name="Gwinn M.L."/>
            <person name="Nelson W.C."/>
            <person name="DeBoy R.T."/>
            <person name="Kolonay J.F."/>
            <person name="McClarty G."/>
            <person name="Salzberg S.L."/>
            <person name="Eisen J.A."/>
            <person name="Fraser C.M."/>
        </authorList>
    </citation>
    <scope>NUCLEOTIDE SEQUENCE [LARGE SCALE GENOMIC DNA]</scope>
    <source>
        <strain>MoPn / Nigg</strain>
    </source>
</reference>
<keyword id="KW-0687">Ribonucleoprotein</keyword>
<keyword id="KW-0689">Ribosomal protein</keyword>
<dbReference type="EMBL" id="AE002160">
    <property type="protein sequence ID" value="AAF39531.1"/>
    <property type="molecule type" value="Genomic_DNA"/>
</dbReference>
<dbReference type="PIR" id="F81672">
    <property type="entry name" value="F81672"/>
</dbReference>
<dbReference type="RefSeq" id="WP_009871791.1">
    <property type="nucleotide sequence ID" value="NZ_CP063055.1"/>
</dbReference>
<dbReference type="SMR" id="P0A4A2"/>
<dbReference type="GeneID" id="93065269"/>
<dbReference type="KEGG" id="cmu:TC_0720"/>
<dbReference type="eggNOG" id="COG0051">
    <property type="taxonomic scope" value="Bacteria"/>
</dbReference>
<dbReference type="HOGENOM" id="CLU_122625_1_3_0"/>
<dbReference type="OrthoDB" id="9804464at2"/>
<dbReference type="Proteomes" id="UP000000800">
    <property type="component" value="Chromosome"/>
</dbReference>
<dbReference type="GO" id="GO:1990904">
    <property type="term" value="C:ribonucleoprotein complex"/>
    <property type="evidence" value="ECO:0007669"/>
    <property type="project" value="UniProtKB-KW"/>
</dbReference>
<dbReference type="GO" id="GO:0005840">
    <property type="term" value="C:ribosome"/>
    <property type="evidence" value="ECO:0007669"/>
    <property type="project" value="UniProtKB-KW"/>
</dbReference>
<dbReference type="GO" id="GO:0003735">
    <property type="term" value="F:structural constituent of ribosome"/>
    <property type="evidence" value="ECO:0007669"/>
    <property type="project" value="InterPro"/>
</dbReference>
<dbReference type="GO" id="GO:0000049">
    <property type="term" value="F:tRNA binding"/>
    <property type="evidence" value="ECO:0007669"/>
    <property type="project" value="UniProtKB-UniRule"/>
</dbReference>
<dbReference type="GO" id="GO:0006412">
    <property type="term" value="P:translation"/>
    <property type="evidence" value="ECO:0007669"/>
    <property type="project" value="UniProtKB-UniRule"/>
</dbReference>
<dbReference type="FunFam" id="3.30.70.600:FF:000001">
    <property type="entry name" value="30S ribosomal protein S10"/>
    <property type="match status" value="1"/>
</dbReference>
<dbReference type="Gene3D" id="3.30.70.600">
    <property type="entry name" value="Ribosomal protein S10 domain"/>
    <property type="match status" value="1"/>
</dbReference>
<dbReference type="HAMAP" id="MF_00508">
    <property type="entry name" value="Ribosomal_uS10"/>
    <property type="match status" value="1"/>
</dbReference>
<dbReference type="InterPro" id="IPR001848">
    <property type="entry name" value="Ribosomal_uS10"/>
</dbReference>
<dbReference type="InterPro" id="IPR018268">
    <property type="entry name" value="Ribosomal_uS10_CS"/>
</dbReference>
<dbReference type="InterPro" id="IPR027486">
    <property type="entry name" value="Ribosomal_uS10_dom"/>
</dbReference>
<dbReference type="InterPro" id="IPR036838">
    <property type="entry name" value="Ribosomal_uS10_dom_sf"/>
</dbReference>
<dbReference type="NCBIfam" id="NF001861">
    <property type="entry name" value="PRK00596.1"/>
    <property type="match status" value="1"/>
</dbReference>
<dbReference type="NCBIfam" id="TIGR01049">
    <property type="entry name" value="rpsJ_bact"/>
    <property type="match status" value="1"/>
</dbReference>
<dbReference type="PANTHER" id="PTHR11700">
    <property type="entry name" value="30S RIBOSOMAL PROTEIN S10 FAMILY MEMBER"/>
    <property type="match status" value="1"/>
</dbReference>
<dbReference type="Pfam" id="PF00338">
    <property type="entry name" value="Ribosomal_S10"/>
    <property type="match status" value="1"/>
</dbReference>
<dbReference type="PRINTS" id="PR00971">
    <property type="entry name" value="RIBOSOMALS10"/>
</dbReference>
<dbReference type="SMART" id="SM01403">
    <property type="entry name" value="Ribosomal_S10"/>
    <property type="match status" value="1"/>
</dbReference>
<dbReference type="SUPFAM" id="SSF54999">
    <property type="entry name" value="Ribosomal protein S10"/>
    <property type="match status" value="1"/>
</dbReference>
<dbReference type="PROSITE" id="PS00361">
    <property type="entry name" value="RIBOSOMAL_S10"/>
    <property type="match status" value="1"/>
</dbReference>
<sequence>MKQQKQRIRIRLKGFDQGQLDQSTANIVETAKRTGARVVGPIPLPTKREVYTVLRSPHVDKKSREQFEIRTHKRLIDILDPTGKTIDALKMLSLPAGVDIKIKAA</sequence>